<reference key="1">
    <citation type="journal article" date="2002" name="Lancet">
        <title>Genome and virulence determinants of high virulence community-acquired MRSA.</title>
        <authorList>
            <person name="Baba T."/>
            <person name="Takeuchi F."/>
            <person name="Kuroda M."/>
            <person name="Yuzawa H."/>
            <person name="Aoki K."/>
            <person name="Oguchi A."/>
            <person name="Nagai Y."/>
            <person name="Iwama N."/>
            <person name="Asano K."/>
            <person name="Naimi T."/>
            <person name="Kuroda H."/>
            <person name="Cui L."/>
            <person name="Yamamoto K."/>
            <person name="Hiramatsu K."/>
        </authorList>
    </citation>
    <scope>NUCLEOTIDE SEQUENCE [LARGE SCALE GENOMIC DNA]</scope>
    <source>
        <strain>MW2</strain>
    </source>
</reference>
<organism>
    <name type="scientific">Staphylococcus aureus (strain MW2)</name>
    <dbReference type="NCBI Taxonomy" id="196620"/>
    <lineage>
        <taxon>Bacteria</taxon>
        <taxon>Bacillati</taxon>
        <taxon>Bacillota</taxon>
        <taxon>Bacilli</taxon>
        <taxon>Bacillales</taxon>
        <taxon>Staphylococcaceae</taxon>
        <taxon>Staphylococcus</taxon>
    </lineage>
</organism>
<protein>
    <recommendedName>
        <fullName>Acetoin utilization protein AcuC</fullName>
    </recommendedName>
</protein>
<sequence length="389" mass="44659">MQQHSSKTAYVYSDKLLQYRFHDQHPFNQMRLKLTTELLLNANLLSPEQIVQPRIATDDELMLIHKYDYVEAIKHASHGIISEDEAKKYGLNDEENSQFKHMHRHSATIVGGALTLADLIMSGKVLNGCHLGGGLHHAQPGRASGFCIYNDIAITAQYLAKEYNQRVLIIDTDAHHGDGTQWSFYADNHVTTYSIHETGKFLFPGSGHYTERGEDIGYGHTVNVPLEPYTEDASFLECFKLTVEPVVKSFKPDIILSVNGVDIHYRDPLTHLNCTLHSLYEIPYFVKYLADSYTNGKVIMFGGGGYNIWRVVPRAWSHVFLSLIDQPIQSGYLPLEWINKWKHYSSELLPKRWEDRLNDYTYVPRTKEISEKNKKLALHIASWYESTRQ</sequence>
<dbReference type="EMBL" id="BA000033">
    <property type="protein sequence ID" value="BAB95543.1"/>
    <property type="molecule type" value="Genomic_DNA"/>
</dbReference>
<dbReference type="RefSeq" id="WP_001184010.1">
    <property type="nucleotide sequence ID" value="NC_003923.1"/>
</dbReference>
<dbReference type="SMR" id="Q8NW34"/>
<dbReference type="KEGG" id="sam:MW1678"/>
<dbReference type="HOGENOM" id="CLU_007727_8_0_9"/>
<dbReference type="UniPathway" id="UPA00040"/>
<dbReference type="GO" id="GO:0004407">
    <property type="term" value="F:histone deacetylase activity"/>
    <property type="evidence" value="ECO:0007669"/>
    <property type="project" value="TreeGrafter"/>
</dbReference>
<dbReference type="GO" id="GO:0045150">
    <property type="term" value="P:acetoin catabolic process"/>
    <property type="evidence" value="ECO:0007669"/>
    <property type="project" value="UniProtKB-UniPathway"/>
</dbReference>
<dbReference type="GO" id="GO:0040029">
    <property type="term" value="P:epigenetic regulation of gene expression"/>
    <property type="evidence" value="ECO:0007669"/>
    <property type="project" value="TreeGrafter"/>
</dbReference>
<dbReference type="CDD" id="cd09994">
    <property type="entry name" value="HDAC_AcuC_like"/>
    <property type="match status" value="1"/>
</dbReference>
<dbReference type="Gene3D" id="3.40.800.20">
    <property type="entry name" value="Histone deacetylase domain"/>
    <property type="match status" value="1"/>
</dbReference>
<dbReference type="InterPro" id="IPR003085">
    <property type="entry name" value="AcuC"/>
</dbReference>
<dbReference type="InterPro" id="IPR050284">
    <property type="entry name" value="HDAC_PDAC"/>
</dbReference>
<dbReference type="InterPro" id="IPR000286">
    <property type="entry name" value="His_deacetylse"/>
</dbReference>
<dbReference type="InterPro" id="IPR023801">
    <property type="entry name" value="His_deacetylse_dom"/>
</dbReference>
<dbReference type="InterPro" id="IPR037138">
    <property type="entry name" value="His_deacetylse_dom_sf"/>
</dbReference>
<dbReference type="InterPro" id="IPR023696">
    <property type="entry name" value="Ureohydrolase_dom_sf"/>
</dbReference>
<dbReference type="PANTHER" id="PTHR10625:SF10">
    <property type="entry name" value="HISTONE DEACETYLASE HDAC1"/>
    <property type="match status" value="1"/>
</dbReference>
<dbReference type="PANTHER" id="PTHR10625">
    <property type="entry name" value="HISTONE DEACETYLASE HDAC1-RELATED"/>
    <property type="match status" value="1"/>
</dbReference>
<dbReference type="Pfam" id="PF00850">
    <property type="entry name" value="Hist_deacetyl"/>
    <property type="match status" value="1"/>
</dbReference>
<dbReference type="PRINTS" id="PR01272">
    <property type="entry name" value="ACUCPROTEIN"/>
</dbReference>
<dbReference type="PRINTS" id="PR01270">
    <property type="entry name" value="HDASUPER"/>
</dbReference>
<dbReference type="SUPFAM" id="SSF52768">
    <property type="entry name" value="Arginase/deacetylase"/>
    <property type="match status" value="1"/>
</dbReference>
<comment type="function">
    <text evidence="1">Role in growth on acetoin or butanediol. Involved in the breakdown of these compounds used as a carbon source (By similarity).</text>
</comment>
<comment type="pathway">
    <text>Ketone degradation; acetoin degradation.</text>
</comment>
<comment type="similarity">
    <text evidence="2">Belongs to the histone deacetylase family.</text>
</comment>
<evidence type="ECO:0000250" key="1"/>
<evidence type="ECO:0000305" key="2"/>
<gene>
    <name type="primary">acuC</name>
    <name type="ordered locus">MW1678</name>
</gene>
<name>ACUC_STAAW</name>
<accession>Q8NW34</accession>
<proteinExistence type="inferred from homology"/>
<keyword id="KW-0006">Acetoin catabolism</keyword>
<feature type="chain" id="PRO_0000114735" description="Acetoin utilization protein AcuC">
    <location>
        <begin position="1"/>
        <end position="389"/>
    </location>
</feature>